<protein>
    <recommendedName>
        <fullName>Fructose-1,6-bisphosphatase class 2</fullName>
        <shortName>FBPase class 2</shortName>
        <ecNumber>3.1.3.11</ecNumber>
    </recommendedName>
    <alternativeName>
        <fullName>D-fructose-1,6-bisphosphate 1-phosphohydrolase class 2</fullName>
    </alternativeName>
</protein>
<organism>
    <name type="scientific">Mycobacterium tuberculosis (strain CDC 1551 / Oshkosh)</name>
    <dbReference type="NCBI Taxonomy" id="83331"/>
    <lineage>
        <taxon>Bacteria</taxon>
        <taxon>Bacillati</taxon>
        <taxon>Actinomycetota</taxon>
        <taxon>Actinomycetes</taxon>
        <taxon>Mycobacteriales</taxon>
        <taxon>Mycobacteriaceae</taxon>
        <taxon>Mycobacterium</taxon>
        <taxon>Mycobacterium tuberculosis complex</taxon>
    </lineage>
</organism>
<dbReference type="EC" id="3.1.3.11"/>
<dbReference type="EMBL" id="AE000516">
    <property type="protein sequence ID" value="AAK45389.1"/>
    <property type="status" value="ALT_INIT"/>
    <property type="molecule type" value="Genomic_DNA"/>
</dbReference>
<dbReference type="PIR" id="A70897">
    <property type="entry name" value="A70897"/>
</dbReference>
<dbReference type="RefSeq" id="WP_003898726.1">
    <property type="nucleotide sequence ID" value="NZ_KK341227.1"/>
</dbReference>
<dbReference type="SMR" id="P9WN20"/>
<dbReference type="GeneID" id="45425073"/>
<dbReference type="KEGG" id="mtc:MT1131"/>
<dbReference type="PATRIC" id="fig|83331.31.peg.1221"/>
<dbReference type="HOGENOM" id="CLU_054938_0_0_11"/>
<dbReference type="UniPathway" id="UPA00138"/>
<dbReference type="Proteomes" id="UP000001020">
    <property type="component" value="Chromosome"/>
</dbReference>
<dbReference type="GO" id="GO:0005829">
    <property type="term" value="C:cytosol"/>
    <property type="evidence" value="ECO:0007669"/>
    <property type="project" value="TreeGrafter"/>
</dbReference>
<dbReference type="GO" id="GO:0042132">
    <property type="term" value="F:fructose 1,6-bisphosphate 1-phosphatase activity"/>
    <property type="evidence" value="ECO:0007669"/>
    <property type="project" value="UniProtKB-EC"/>
</dbReference>
<dbReference type="GO" id="GO:0046872">
    <property type="term" value="F:metal ion binding"/>
    <property type="evidence" value="ECO:0007669"/>
    <property type="project" value="UniProtKB-KW"/>
</dbReference>
<dbReference type="GO" id="GO:0030388">
    <property type="term" value="P:fructose 1,6-bisphosphate metabolic process"/>
    <property type="evidence" value="ECO:0007669"/>
    <property type="project" value="TreeGrafter"/>
</dbReference>
<dbReference type="GO" id="GO:0006094">
    <property type="term" value="P:gluconeogenesis"/>
    <property type="evidence" value="ECO:0007669"/>
    <property type="project" value="UniProtKB-UniPathway"/>
</dbReference>
<dbReference type="GO" id="GO:0006071">
    <property type="term" value="P:glycerol metabolic process"/>
    <property type="evidence" value="ECO:0007669"/>
    <property type="project" value="InterPro"/>
</dbReference>
<dbReference type="CDD" id="cd01516">
    <property type="entry name" value="FBPase_glpX"/>
    <property type="match status" value="1"/>
</dbReference>
<dbReference type="FunFam" id="3.40.190.90:FF:000001">
    <property type="entry name" value="Fructose-1,6-bisphosphatase"/>
    <property type="match status" value="1"/>
</dbReference>
<dbReference type="Gene3D" id="3.40.190.90">
    <property type="match status" value="1"/>
</dbReference>
<dbReference type="Gene3D" id="3.30.540.10">
    <property type="entry name" value="Fructose-1,6-Bisphosphatase, subunit A, domain 1"/>
    <property type="match status" value="1"/>
</dbReference>
<dbReference type="InterPro" id="IPR004464">
    <property type="entry name" value="FBPase_class-2/SBPase"/>
</dbReference>
<dbReference type="NCBIfam" id="TIGR00330">
    <property type="entry name" value="glpX"/>
    <property type="match status" value="1"/>
</dbReference>
<dbReference type="PANTHER" id="PTHR30447:SF0">
    <property type="entry name" value="FRUCTOSE-1,6-BISPHOSPHATASE 1 CLASS 2-RELATED"/>
    <property type="match status" value="1"/>
</dbReference>
<dbReference type="PANTHER" id="PTHR30447">
    <property type="entry name" value="FRUCTOSE-1,6-BISPHOSPHATASE CLASS 2"/>
    <property type="match status" value="1"/>
</dbReference>
<dbReference type="Pfam" id="PF03320">
    <property type="entry name" value="FBPase_glpX"/>
    <property type="match status" value="1"/>
</dbReference>
<dbReference type="PIRSF" id="PIRSF004532">
    <property type="entry name" value="GlpX"/>
    <property type="match status" value="1"/>
</dbReference>
<dbReference type="SUPFAM" id="SSF56655">
    <property type="entry name" value="Carbohydrate phosphatase"/>
    <property type="match status" value="1"/>
</dbReference>
<gene>
    <name type="primary">glpX</name>
    <name type="ordered locus">MT1131</name>
</gene>
<comment type="function">
    <text evidence="1">Catalyzes the hydrolysis of fructose 1,6-bisphosphate to fructose 6-phosphate. Seems to be the major FBPase of M.tuberculosis and to play a key role in gluconeogenesis for conversion of lipid carbon into cell wall glycans. Does not display activity against inositol 1-phosphate (By similarity).</text>
</comment>
<comment type="catalytic activity">
    <reaction>
        <text>beta-D-fructose 1,6-bisphosphate + H2O = beta-D-fructose 6-phosphate + phosphate</text>
        <dbReference type="Rhea" id="RHEA:11064"/>
        <dbReference type="ChEBI" id="CHEBI:15377"/>
        <dbReference type="ChEBI" id="CHEBI:32966"/>
        <dbReference type="ChEBI" id="CHEBI:43474"/>
        <dbReference type="ChEBI" id="CHEBI:57634"/>
        <dbReference type="EC" id="3.1.3.11"/>
    </reaction>
</comment>
<comment type="cofactor">
    <cofactor evidence="1">
        <name>Mn(2+)</name>
        <dbReference type="ChEBI" id="CHEBI:29035"/>
    </cofactor>
</comment>
<comment type="pathway">
    <text>Carbohydrate biosynthesis; gluconeogenesis.</text>
</comment>
<comment type="subcellular location">
    <subcellularLocation>
        <location evidence="1">Cytoplasm</location>
    </subcellularLocation>
</comment>
<comment type="similarity">
    <text evidence="3">Belongs to the FBPase class 2 family.</text>
</comment>
<comment type="sequence caution" evidence="3">
    <conflict type="erroneous initiation">
        <sequence resource="EMBL-CDS" id="AAK45389"/>
    </conflict>
    <text>Truncated N-terminus.</text>
</comment>
<reference key="1">
    <citation type="journal article" date="2002" name="J. Bacteriol.">
        <title>Whole-genome comparison of Mycobacterium tuberculosis clinical and laboratory strains.</title>
        <authorList>
            <person name="Fleischmann R.D."/>
            <person name="Alland D."/>
            <person name="Eisen J.A."/>
            <person name="Carpenter L."/>
            <person name="White O."/>
            <person name="Peterson J.D."/>
            <person name="DeBoy R.T."/>
            <person name="Dodson R.J."/>
            <person name="Gwinn M.L."/>
            <person name="Haft D.H."/>
            <person name="Hickey E.K."/>
            <person name="Kolonay J.F."/>
            <person name="Nelson W.C."/>
            <person name="Umayam L.A."/>
            <person name="Ermolaeva M.D."/>
            <person name="Salzberg S.L."/>
            <person name="Delcher A."/>
            <person name="Utterback T.R."/>
            <person name="Weidman J.F."/>
            <person name="Khouri H.M."/>
            <person name="Gill J."/>
            <person name="Mikula A."/>
            <person name="Bishai W."/>
            <person name="Jacobs W.R. Jr."/>
            <person name="Venter J.C."/>
            <person name="Fraser C.M."/>
        </authorList>
    </citation>
    <scope>NUCLEOTIDE SEQUENCE [LARGE SCALE GENOMIC DNA]</scope>
    <source>
        <strain>CDC 1551 / Oshkosh</strain>
    </source>
</reference>
<proteinExistence type="inferred from homology"/>
<keyword id="KW-0007">Acetylation</keyword>
<keyword id="KW-0119">Carbohydrate metabolism</keyword>
<keyword id="KW-0963">Cytoplasm</keyword>
<keyword id="KW-0378">Hydrolase</keyword>
<keyword id="KW-0464">Manganese</keyword>
<keyword id="KW-0479">Metal-binding</keyword>
<keyword id="KW-1185">Reference proteome</keyword>
<feature type="initiator methionine" description="Removed" evidence="1">
    <location>
        <position position="1"/>
    </location>
</feature>
<feature type="chain" id="PRO_0000427203" description="Fructose-1,6-bisphosphatase class 2">
    <location>
        <begin position="2"/>
        <end position="362"/>
    </location>
</feature>
<feature type="region of interest" description="Disordered" evidence="2">
    <location>
        <begin position="1"/>
        <end position="32"/>
    </location>
</feature>
<feature type="compositionally biased region" description="Polar residues" evidence="2">
    <location>
        <begin position="1"/>
        <end position="12"/>
    </location>
</feature>
<feature type="compositionally biased region" description="Basic and acidic residues" evidence="2">
    <location>
        <begin position="17"/>
        <end position="30"/>
    </location>
</feature>
<feature type="binding site" evidence="1">
    <location>
        <position position="61"/>
    </location>
    <ligand>
        <name>Mn(2+)</name>
        <dbReference type="ChEBI" id="CHEBI:29035"/>
        <label>1</label>
    </ligand>
</feature>
<feature type="binding site" evidence="1">
    <location>
        <position position="85"/>
    </location>
    <ligand>
        <name>Mn(2+)</name>
        <dbReference type="ChEBI" id="CHEBI:29035"/>
        <label>1</label>
    </ligand>
</feature>
<feature type="binding site" evidence="1">
    <location>
        <position position="113"/>
    </location>
    <ligand>
        <name>Mn(2+)</name>
        <dbReference type="ChEBI" id="CHEBI:29035"/>
        <label>2</label>
    </ligand>
</feature>
<feature type="binding site" evidence="1">
    <location>
        <begin position="116"/>
        <end position="118"/>
    </location>
    <ligand>
        <name>substrate</name>
    </ligand>
</feature>
<feature type="binding site" evidence="1">
    <location>
        <position position="116"/>
    </location>
    <ligand>
        <name>Mn(2+)</name>
        <dbReference type="ChEBI" id="CHEBI:29035"/>
        <label>2</label>
    </ligand>
</feature>
<feature type="binding site" evidence="1">
    <location>
        <position position="148"/>
    </location>
    <ligand>
        <name>substrate</name>
    </ligand>
</feature>
<feature type="binding site" evidence="1">
    <location>
        <begin position="193"/>
        <end position="195"/>
    </location>
    <ligand>
        <name>substrate</name>
    </ligand>
</feature>
<feature type="binding site" evidence="1">
    <location>
        <begin position="215"/>
        <end position="217"/>
    </location>
    <ligand>
        <name>substrate</name>
    </ligand>
</feature>
<feature type="binding site" evidence="1">
    <location>
        <position position="239"/>
    </location>
    <ligand>
        <name>substrate</name>
    </ligand>
</feature>
<feature type="binding site" evidence="1">
    <location>
        <position position="242"/>
    </location>
    <ligand>
        <name>Mn(2+)</name>
        <dbReference type="ChEBI" id="CHEBI:29035"/>
        <label>2</label>
    </ligand>
</feature>
<feature type="modified residue" description="N-acetylthreonine; partial" evidence="1">
    <location>
        <position position="2"/>
    </location>
</feature>
<sequence length="362" mass="38084">MTAEGSGSSTAAVASHDPSHTRPSRREAPDRNLAMELVRVTEAGAMAAGRWVGRGDKEGGDGAAVDAMRELVNSVSMRGVVVIGEGEKDHAPMLYNGEEVGNGDGPECDFAVDPIDGTTLMSKGMTNAISVLAVADRGTMFDPSAVFYMNKIAVGPDAAHVLDITAPISENIRAVAKVKDLSVRDMTVCILDRPRHAQLIHDVRATGARIRLITDGDVAGAISACRPHSGTDLLAGIGGTPEGIIAAAAIRCMGGAIQAQLAPRDDAERRKALEAGYDLNQVLTTEDLVSGENVFFCATGVTDGDLLKGVRYYPGGCTTHSIVMRSKSGTVRMIEAYHRLSKLNEYSAIDFTGDSSAVYPLP</sequence>
<name>GLPX_MYCTO</name>
<evidence type="ECO:0000250" key="1"/>
<evidence type="ECO:0000256" key="2">
    <source>
        <dbReference type="SAM" id="MobiDB-lite"/>
    </source>
</evidence>
<evidence type="ECO:0000305" key="3"/>
<accession>P9WN20</accession>
<accession>L0T8L8</accession>
<accession>O53447</accession>
<accession>Q7D8U9</accession>